<evidence type="ECO:0000255" key="1">
    <source>
        <dbReference type="HAMAP-Rule" id="MF_00332"/>
    </source>
</evidence>
<evidence type="ECO:0000256" key="2">
    <source>
        <dbReference type="SAM" id="MobiDB-lite"/>
    </source>
</evidence>
<reference key="1">
    <citation type="journal article" date="2009" name="BMC Genomics">
        <title>Evidence for niche adaptation in the genome of the bovine pathogen Streptococcus uberis.</title>
        <authorList>
            <person name="Ward P.N."/>
            <person name="Holden M.T.G."/>
            <person name="Leigh J.A."/>
            <person name="Lennard N."/>
            <person name="Bignell A."/>
            <person name="Barron A."/>
            <person name="Clark L."/>
            <person name="Quail M.A."/>
            <person name="Woodward J."/>
            <person name="Barrell B.G."/>
            <person name="Egan S.A."/>
            <person name="Field T.R."/>
            <person name="Maskell D."/>
            <person name="Kehoe M."/>
            <person name="Dowson C.G."/>
            <person name="Chanter N."/>
            <person name="Whatmore A.M."/>
            <person name="Bentley S.D."/>
            <person name="Parkhill J."/>
        </authorList>
    </citation>
    <scope>NUCLEOTIDE SEQUENCE [LARGE SCALE GENOMIC DNA]</scope>
    <source>
        <strain>ATCC BAA-854 / 0140J</strain>
    </source>
</reference>
<organism>
    <name type="scientific">Streptococcus uberis (strain ATCC BAA-854 / 0140J)</name>
    <dbReference type="NCBI Taxonomy" id="218495"/>
    <lineage>
        <taxon>Bacteria</taxon>
        <taxon>Bacillati</taxon>
        <taxon>Bacillota</taxon>
        <taxon>Bacilli</taxon>
        <taxon>Lactobacillales</taxon>
        <taxon>Streptococcaceae</taxon>
        <taxon>Streptococcus</taxon>
    </lineage>
</organism>
<name>DNAK_STRU0</name>
<proteinExistence type="inferred from homology"/>
<protein>
    <recommendedName>
        <fullName evidence="1">Chaperone protein DnaK</fullName>
    </recommendedName>
    <alternativeName>
        <fullName evidence="1">HSP70</fullName>
    </alternativeName>
    <alternativeName>
        <fullName evidence="1">Heat shock 70 kDa protein</fullName>
    </alternativeName>
    <alternativeName>
        <fullName evidence="1">Heat shock protein 70</fullName>
    </alternativeName>
</protein>
<keyword id="KW-0067">ATP-binding</keyword>
<keyword id="KW-0143">Chaperone</keyword>
<keyword id="KW-0547">Nucleotide-binding</keyword>
<keyword id="KW-0597">Phosphoprotein</keyword>
<keyword id="KW-1185">Reference proteome</keyword>
<keyword id="KW-0346">Stress response</keyword>
<comment type="function">
    <text evidence="1">Acts as a chaperone.</text>
</comment>
<comment type="induction">
    <text evidence="1">By stress conditions e.g. heat shock.</text>
</comment>
<comment type="similarity">
    <text evidence="1">Belongs to the heat shock protein 70 family.</text>
</comment>
<accession>B9DVF3</accession>
<feature type="chain" id="PRO_1000133164" description="Chaperone protein DnaK">
    <location>
        <begin position="1"/>
        <end position="608"/>
    </location>
</feature>
<feature type="region of interest" description="Disordered" evidence="2">
    <location>
        <begin position="576"/>
        <end position="608"/>
    </location>
</feature>
<feature type="compositionally biased region" description="Low complexity" evidence="2">
    <location>
        <begin position="576"/>
        <end position="598"/>
    </location>
</feature>
<feature type="compositionally biased region" description="Acidic residues" evidence="2">
    <location>
        <begin position="599"/>
        <end position="608"/>
    </location>
</feature>
<feature type="modified residue" description="Phosphothreonine; by autocatalysis" evidence="1">
    <location>
        <position position="173"/>
    </location>
</feature>
<dbReference type="EMBL" id="AM946015">
    <property type="protein sequence ID" value="CAR43227.1"/>
    <property type="molecule type" value="Genomic_DNA"/>
</dbReference>
<dbReference type="RefSeq" id="WP_015911813.1">
    <property type="nucleotide sequence ID" value="NC_012004.1"/>
</dbReference>
<dbReference type="SMR" id="B9DVF3"/>
<dbReference type="STRING" id="218495.SUB1504"/>
<dbReference type="GeneID" id="93826822"/>
<dbReference type="KEGG" id="sub:SUB1504"/>
<dbReference type="eggNOG" id="COG0443">
    <property type="taxonomic scope" value="Bacteria"/>
</dbReference>
<dbReference type="HOGENOM" id="CLU_005965_2_4_9"/>
<dbReference type="OrthoDB" id="9766019at2"/>
<dbReference type="Proteomes" id="UP000000449">
    <property type="component" value="Chromosome"/>
</dbReference>
<dbReference type="GO" id="GO:0005524">
    <property type="term" value="F:ATP binding"/>
    <property type="evidence" value="ECO:0007669"/>
    <property type="project" value="UniProtKB-UniRule"/>
</dbReference>
<dbReference type="GO" id="GO:0140662">
    <property type="term" value="F:ATP-dependent protein folding chaperone"/>
    <property type="evidence" value="ECO:0007669"/>
    <property type="project" value="InterPro"/>
</dbReference>
<dbReference type="GO" id="GO:0051082">
    <property type="term" value="F:unfolded protein binding"/>
    <property type="evidence" value="ECO:0007669"/>
    <property type="project" value="InterPro"/>
</dbReference>
<dbReference type="CDD" id="cd10234">
    <property type="entry name" value="ASKHA_NBD_HSP70_DnaK-like"/>
    <property type="match status" value="1"/>
</dbReference>
<dbReference type="FunFam" id="2.60.34.10:FF:000014">
    <property type="entry name" value="Chaperone protein DnaK HSP70"/>
    <property type="match status" value="1"/>
</dbReference>
<dbReference type="FunFam" id="3.30.420.40:FF:000071">
    <property type="entry name" value="Molecular chaperone DnaK"/>
    <property type="match status" value="1"/>
</dbReference>
<dbReference type="FunFam" id="3.90.640.10:FF:000003">
    <property type="entry name" value="Molecular chaperone DnaK"/>
    <property type="match status" value="1"/>
</dbReference>
<dbReference type="Gene3D" id="1.20.1270.10">
    <property type="match status" value="1"/>
</dbReference>
<dbReference type="Gene3D" id="3.30.420.40">
    <property type="match status" value="2"/>
</dbReference>
<dbReference type="Gene3D" id="3.90.640.10">
    <property type="entry name" value="Actin, Chain A, domain 4"/>
    <property type="match status" value="1"/>
</dbReference>
<dbReference type="Gene3D" id="2.60.34.10">
    <property type="entry name" value="Substrate Binding Domain Of DNAk, Chain A, domain 1"/>
    <property type="match status" value="1"/>
</dbReference>
<dbReference type="HAMAP" id="MF_00332">
    <property type="entry name" value="DnaK"/>
    <property type="match status" value="1"/>
</dbReference>
<dbReference type="InterPro" id="IPR043129">
    <property type="entry name" value="ATPase_NBD"/>
</dbReference>
<dbReference type="InterPro" id="IPR012725">
    <property type="entry name" value="Chaperone_DnaK"/>
</dbReference>
<dbReference type="InterPro" id="IPR018181">
    <property type="entry name" value="Heat_shock_70_CS"/>
</dbReference>
<dbReference type="InterPro" id="IPR029048">
    <property type="entry name" value="HSP70_C_sf"/>
</dbReference>
<dbReference type="InterPro" id="IPR029047">
    <property type="entry name" value="HSP70_peptide-bd_sf"/>
</dbReference>
<dbReference type="InterPro" id="IPR013126">
    <property type="entry name" value="Hsp_70_fam"/>
</dbReference>
<dbReference type="NCBIfam" id="NF001413">
    <property type="entry name" value="PRK00290.1"/>
    <property type="match status" value="1"/>
</dbReference>
<dbReference type="NCBIfam" id="TIGR02350">
    <property type="entry name" value="prok_dnaK"/>
    <property type="match status" value="1"/>
</dbReference>
<dbReference type="PANTHER" id="PTHR19375">
    <property type="entry name" value="HEAT SHOCK PROTEIN 70KDA"/>
    <property type="match status" value="1"/>
</dbReference>
<dbReference type="Pfam" id="PF00012">
    <property type="entry name" value="HSP70"/>
    <property type="match status" value="1"/>
</dbReference>
<dbReference type="PRINTS" id="PR00301">
    <property type="entry name" value="HEATSHOCK70"/>
</dbReference>
<dbReference type="SUPFAM" id="SSF53067">
    <property type="entry name" value="Actin-like ATPase domain"/>
    <property type="match status" value="2"/>
</dbReference>
<dbReference type="SUPFAM" id="SSF100934">
    <property type="entry name" value="Heat shock protein 70kD (HSP70), C-terminal subdomain"/>
    <property type="match status" value="1"/>
</dbReference>
<dbReference type="SUPFAM" id="SSF100920">
    <property type="entry name" value="Heat shock protein 70kD (HSP70), peptide-binding domain"/>
    <property type="match status" value="1"/>
</dbReference>
<dbReference type="PROSITE" id="PS00297">
    <property type="entry name" value="HSP70_1"/>
    <property type="match status" value="1"/>
</dbReference>
<dbReference type="PROSITE" id="PS00329">
    <property type="entry name" value="HSP70_2"/>
    <property type="match status" value="1"/>
</dbReference>
<dbReference type="PROSITE" id="PS01036">
    <property type="entry name" value="HSP70_3"/>
    <property type="match status" value="1"/>
</dbReference>
<sequence>MSKIIGIDLGTTNSAVAVLEGTESKIIANPEGNRTTPSVVSFKNGEIIVGDAAKRQAVTNPDTVISIKSKMGTSEKVSANGKDYTPQEISAMILQYLKGYAEDYLGEKVEKAVITVPAYFNDAQRQATKDAGKIAGLEVERIVNEPTAAALAYGMDKTDKDEKILVFDLGGGTFDVSILELGDGVFDVLATAGDNKLGGDDFDQKIIDYLVEEFKKENGIDLSQDKMALQRLKDAAEKAKKDLSGVTQTQISLPFITAGAAGPLHLEVSLTRAKFDDLTRDLVERTKVPVRRALSDAGLSLSEIDEVILVGGSTRIPAVVEAVKAETGKEPNKSVNPDEVVAMGAAIQGGVITGDVKDVVLLDVTPLSLGIETMGGVFTKLIERNTTIPTSKSQVFSTAADNQPAVDIHVLQGERPMAADNKTLGRFQLTDIPAAPRGIPQIEVTFDIDKNGIVSVKAKDLGTQKEQHIVIKSNDGLSEEEIERMMKDAEANAEADAKRKEEVDLKNEVDQAIFTTEKTIKETEGKGFDTERDAAQAALDELKAAQESGNADDMKAKLEALNEKAQALAVKIYEQAAAAQQAAQGAEGAQSSDSANNDDVVDGEFTEK</sequence>
<gene>
    <name evidence="1" type="primary">dnaK</name>
    <name type="ordered locus">SUB1504</name>
</gene>